<accession>P75583</accession>
<comment type="subcellular location">
    <subcellularLocation>
        <location evidence="1">Cell membrane</location>
        <topology evidence="1">Lipid-anchor</topology>
    </subcellularLocation>
</comment>
<evidence type="ECO:0000255" key="1">
    <source>
        <dbReference type="PROSITE-ProRule" id="PRU00303"/>
    </source>
</evidence>
<evidence type="ECO:0000256" key="2">
    <source>
        <dbReference type="SAM" id="MobiDB-lite"/>
    </source>
</evidence>
<dbReference type="EMBL" id="U00089">
    <property type="protein sequence ID" value="AAB96317.1"/>
    <property type="molecule type" value="Genomic_DNA"/>
</dbReference>
<dbReference type="PIR" id="S73995">
    <property type="entry name" value="S73995"/>
</dbReference>
<dbReference type="RefSeq" id="NP_109850.1">
    <property type="nucleotide sequence ID" value="NC_000912.1"/>
</dbReference>
<dbReference type="RefSeq" id="WP_010874519.1">
    <property type="nucleotide sequence ID" value="NC_000912.1"/>
</dbReference>
<dbReference type="STRING" id="272634.MPN_162"/>
<dbReference type="EnsemblBacteria" id="AAB96317">
    <property type="protein sequence ID" value="AAB96317"/>
    <property type="gene ID" value="MPN_162"/>
</dbReference>
<dbReference type="KEGG" id="mpn:MPN_162"/>
<dbReference type="PATRIC" id="fig|272634.6.peg.180"/>
<dbReference type="HOGENOM" id="CLU_989785_0_0_14"/>
<dbReference type="OrthoDB" id="10013750at2"/>
<dbReference type="BioCyc" id="MPNE272634:G1GJ3-271-MONOMER"/>
<dbReference type="Proteomes" id="UP000000808">
    <property type="component" value="Chromosome"/>
</dbReference>
<dbReference type="GO" id="GO:0005886">
    <property type="term" value="C:plasma membrane"/>
    <property type="evidence" value="ECO:0007669"/>
    <property type="project" value="UniProtKB-SubCell"/>
</dbReference>
<dbReference type="NCBIfam" id="NF045741">
    <property type="entry name" value="MPN162"/>
    <property type="match status" value="1"/>
</dbReference>
<dbReference type="PROSITE" id="PS51257">
    <property type="entry name" value="PROKAR_LIPOPROTEIN"/>
    <property type="match status" value="1"/>
</dbReference>
<sequence length="320" mass="36096">MKLNLRFPSYFLPVVAASAFLVSCATPNTYEVQRAALIQLVEEDERQNYIQKGSMGANAVMTAAKAETKTAEKTATSTKAASIELKKTDTDIKTTTTTENKSASGYKLDTLFGDYILWVVDHLSGLLFSPKTNNSTTTQKIQLITEDKMILDGGNLTVEKNHEHGHTHKNGETHEHDHDHHEGEEEVIVGRALSFANGLFLVVDLKEEKHEEKKEAKSEMSMNSKDMVMMTKTEMMSKEMKSEQKMEKKEEHEHPHKKLSLSTTAYKFGQSFNILEFTGAMHHKTAHNNETEFKNLGKKYGGMTEYTIVDFDFNPPKPTK</sequence>
<name>Y162_MYCPN</name>
<feature type="signal peptide" evidence="1">
    <location>
        <begin position="1"/>
        <end position="23"/>
    </location>
</feature>
<feature type="chain" id="PRO_0000014029" description="Uncharacterized lipoprotein MG149 homolog">
    <location>
        <begin position="24"/>
        <end position="320"/>
    </location>
</feature>
<feature type="region of interest" description="Disordered" evidence="2">
    <location>
        <begin position="160"/>
        <end position="181"/>
    </location>
</feature>
<feature type="lipid moiety-binding region" description="N-palmitoyl cysteine" evidence="1">
    <location>
        <position position="24"/>
    </location>
</feature>
<feature type="lipid moiety-binding region" description="S-diacylglycerol cysteine" evidence="1">
    <location>
        <position position="24"/>
    </location>
</feature>
<proteinExistence type="inferred from homology"/>
<keyword id="KW-1003">Cell membrane</keyword>
<keyword id="KW-0449">Lipoprotein</keyword>
<keyword id="KW-0472">Membrane</keyword>
<keyword id="KW-0564">Palmitate</keyword>
<keyword id="KW-1185">Reference proteome</keyword>
<keyword id="KW-0732">Signal</keyword>
<organism>
    <name type="scientific">Mycoplasma pneumoniae (strain ATCC 29342 / M129 / Subtype 1)</name>
    <name type="common">Mycoplasmoides pneumoniae</name>
    <dbReference type="NCBI Taxonomy" id="272634"/>
    <lineage>
        <taxon>Bacteria</taxon>
        <taxon>Bacillati</taxon>
        <taxon>Mycoplasmatota</taxon>
        <taxon>Mycoplasmoidales</taxon>
        <taxon>Mycoplasmoidaceae</taxon>
        <taxon>Mycoplasmoides</taxon>
    </lineage>
</organism>
<reference key="1">
    <citation type="journal article" date="1996" name="Nucleic Acids Res.">
        <title>Complete sequence analysis of the genome of the bacterium Mycoplasma pneumoniae.</title>
        <authorList>
            <person name="Himmelreich R."/>
            <person name="Hilbert H."/>
            <person name="Plagens H."/>
            <person name="Pirkl E."/>
            <person name="Li B.-C."/>
            <person name="Herrmann R."/>
        </authorList>
    </citation>
    <scope>NUCLEOTIDE SEQUENCE [LARGE SCALE GENOMIC DNA]</scope>
    <source>
        <strain>ATCC 29342 / M129 / Subtype 1</strain>
    </source>
</reference>
<gene>
    <name type="ordered locus">MPN_162</name>
    <name type="ORF">MP669</name>
    <name type="ORF">VXpSPT7_orf320</name>
</gene>
<protein>
    <recommendedName>
        <fullName>Uncharacterized lipoprotein MG149 homolog</fullName>
    </recommendedName>
</protein>